<reference key="1">
    <citation type="journal article" date="1997" name="Nature">
        <title>The complete genome sequence of the Gram-positive bacterium Bacillus subtilis.</title>
        <authorList>
            <person name="Kunst F."/>
            <person name="Ogasawara N."/>
            <person name="Moszer I."/>
            <person name="Albertini A.M."/>
            <person name="Alloni G."/>
            <person name="Azevedo V."/>
            <person name="Bertero M.G."/>
            <person name="Bessieres P."/>
            <person name="Bolotin A."/>
            <person name="Borchert S."/>
            <person name="Borriss R."/>
            <person name="Boursier L."/>
            <person name="Brans A."/>
            <person name="Braun M."/>
            <person name="Brignell S.C."/>
            <person name="Bron S."/>
            <person name="Brouillet S."/>
            <person name="Bruschi C.V."/>
            <person name="Caldwell B."/>
            <person name="Capuano V."/>
            <person name="Carter N.M."/>
            <person name="Choi S.-K."/>
            <person name="Codani J.-J."/>
            <person name="Connerton I.F."/>
            <person name="Cummings N.J."/>
            <person name="Daniel R.A."/>
            <person name="Denizot F."/>
            <person name="Devine K.M."/>
            <person name="Duesterhoeft A."/>
            <person name="Ehrlich S.D."/>
            <person name="Emmerson P.T."/>
            <person name="Entian K.-D."/>
            <person name="Errington J."/>
            <person name="Fabret C."/>
            <person name="Ferrari E."/>
            <person name="Foulger D."/>
            <person name="Fritz C."/>
            <person name="Fujita M."/>
            <person name="Fujita Y."/>
            <person name="Fuma S."/>
            <person name="Galizzi A."/>
            <person name="Galleron N."/>
            <person name="Ghim S.-Y."/>
            <person name="Glaser P."/>
            <person name="Goffeau A."/>
            <person name="Golightly E.J."/>
            <person name="Grandi G."/>
            <person name="Guiseppi G."/>
            <person name="Guy B.J."/>
            <person name="Haga K."/>
            <person name="Haiech J."/>
            <person name="Harwood C.R."/>
            <person name="Henaut A."/>
            <person name="Hilbert H."/>
            <person name="Holsappel S."/>
            <person name="Hosono S."/>
            <person name="Hullo M.-F."/>
            <person name="Itaya M."/>
            <person name="Jones L.-M."/>
            <person name="Joris B."/>
            <person name="Karamata D."/>
            <person name="Kasahara Y."/>
            <person name="Klaerr-Blanchard M."/>
            <person name="Klein C."/>
            <person name="Kobayashi Y."/>
            <person name="Koetter P."/>
            <person name="Koningstein G."/>
            <person name="Krogh S."/>
            <person name="Kumano M."/>
            <person name="Kurita K."/>
            <person name="Lapidus A."/>
            <person name="Lardinois S."/>
            <person name="Lauber J."/>
            <person name="Lazarevic V."/>
            <person name="Lee S.-M."/>
            <person name="Levine A."/>
            <person name="Liu H."/>
            <person name="Masuda S."/>
            <person name="Mauel C."/>
            <person name="Medigue C."/>
            <person name="Medina N."/>
            <person name="Mellado R.P."/>
            <person name="Mizuno M."/>
            <person name="Moestl D."/>
            <person name="Nakai S."/>
            <person name="Noback M."/>
            <person name="Noone D."/>
            <person name="O'Reilly M."/>
            <person name="Ogawa K."/>
            <person name="Ogiwara A."/>
            <person name="Oudega B."/>
            <person name="Park S.-H."/>
            <person name="Parro V."/>
            <person name="Pohl T.M."/>
            <person name="Portetelle D."/>
            <person name="Porwollik S."/>
            <person name="Prescott A.M."/>
            <person name="Presecan E."/>
            <person name="Pujic P."/>
            <person name="Purnelle B."/>
            <person name="Rapoport G."/>
            <person name="Rey M."/>
            <person name="Reynolds S."/>
            <person name="Rieger M."/>
            <person name="Rivolta C."/>
            <person name="Rocha E."/>
            <person name="Roche B."/>
            <person name="Rose M."/>
            <person name="Sadaie Y."/>
            <person name="Sato T."/>
            <person name="Scanlan E."/>
            <person name="Schleich S."/>
            <person name="Schroeter R."/>
            <person name="Scoffone F."/>
            <person name="Sekiguchi J."/>
            <person name="Sekowska A."/>
            <person name="Seror S.J."/>
            <person name="Serror P."/>
            <person name="Shin B.-S."/>
            <person name="Soldo B."/>
            <person name="Sorokin A."/>
            <person name="Tacconi E."/>
            <person name="Takagi T."/>
            <person name="Takahashi H."/>
            <person name="Takemaru K."/>
            <person name="Takeuchi M."/>
            <person name="Tamakoshi A."/>
            <person name="Tanaka T."/>
            <person name="Terpstra P."/>
            <person name="Tognoni A."/>
            <person name="Tosato V."/>
            <person name="Uchiyama S."/>
            <person name="Vandenbol M."/>
            <person name="Vannier F."/>
            <person name="Vassarotti A."/>
            <person name="Viari A."/>
            <person name="Wambutt R."/>
            <person name="Wedler E."/>
            <person name="Wedler H."/>
            <person name="Weitzenegger T."/>
            <person name="Winters P."/>
            <person name="Wipat A."/>
            <person name="Yamamoto H."/>
            <person name="Yamane K."/>
            <person name="Yasumoto K."/>
            <person name="Yata K."/>
            <person name="Yoshida K."/>
            <person name="Yoshikawa H.-F."/>
            <person name="Zumstein E."/>
            <person name="Yoshikawa H."/>
            <person name="Danchin A."/>
        </authorList>
    </citation>
    <scope>NUCLEOTIDE SEQUENCE [LARGE SCALE GENOMIC DNA]</scope>
    <source>
        <strain>168</strain>
    </source>
</reference>
<keyword id="KW-1003">Cell membrane</keyword>
<keyword id="KW-0472">Membrane</keyword>
<keyword id="KW-1185">Reference proteome</keyword>
<keyword id="KW-0812">Transmembrane</keyword>
<keyword id="KW-1133">Transmembrane helix</keyword>
<comment type="subcellular location">
    <subcellularLocation>
        <location evidence="2">Cell membrane</location>
        <topology evidence="2">Multi-pass membrane protein</topology>
    </subcellularLocation>
</comment>
<comment type="similarity">
    <text evidence="2">Belongs to the UPF0715 family.</text>
</comment>
<feature type="chain" id="PRO_0000360615" description="UPF0715 membrane protein YoaG">
    <location>
        <begin position="1"/>
        <end position="134"/>
    </location>
</feature>
<feature type="transmembrane region" description="Helical" evidence="1">
    <location>
        <begin position="9"/>
        <end position="29"/>
    </location>
</feature>
<feature type="transmembrane region" description="Helical" evidence="1">
    <location>
        <begin position="35"/>
        <end position="55"/>
    </location>
</feature>
<feature type="transmembrane region" description="Helical" evidence="1">
    <location>
        <begin position="72"/>
        <end position="92"/>
    </location>
</feature>
<feature type="transmembrane region" description="Helical" evidence="1">
    <location>
        <begin position="106"/>
        <end position="126"/>
    </location>
</feature>
<name>YOAG_BACSU</name>
<sequence length="134" mass="15256">MKKIASYYLMTLGLSSLTFGLLLGFYSFVMYGDMIIALFTAAIALLYGFVVYGLFAVPLQMKLQKKARTFNVMYLLIYSVVAFIAAFLFFVINEPASIAWTLQSYFYYMLSIAAAVIYWLWDSLILYKRTASGV</sequence>
<evidence type="ECO:0000255" key="1"/>
<evidence type="ECO:0000305" key="2"/>
<protein>
    <recommendedName>
        <fullName>UPF0715 membrane protein YoaG</fullName>
    </recommendedName>
</protein>
<organism>
    <name type="scientific">Bacillus subtilis (strain 168)</name>
    <dbReference type="NCBI Taxonomy" id="224308"/>
    <lineage>
        <taxon>Bacteria</taxon>
        <taxon>Bacillati</taxon>
        <taxon>Bacillota</taxon>
        <taxon>Bacilli</taxon>
        <taxon>Bacillales</taxon>
        <taxon>Bacillaceae</taxon>
        <taxon>Bacillus</taxon>
    </lineage>
</organism>
<proteinExistence type="inferred from homology"/>
<dbReference type="EMBL" id="AL009126">
    <property type="protein sequence ID" value="CAB13752.1"/>
    <property type="molecule type" value="Genomic_DNA"/>
</dbReference>
<dbReference type="PIR" id="A69896">
    <property type="entry name" value="A69896"/>
</dbReference>
<dbReference type="RefSeq" id="NP_389741.1">
    <property type="nucleotide sequence ID" value="NC_000964.3"/>
</dbReference>
<dbReference type="RefSeq" id="WP_004399396.1">
    <property type="nucleotide sequence ID" value="NZ_OZ025638.1"/>
</dbReference>
<dbReference type="FunCoup" id="O31830">
    <property type="interactions" value="8"/>
</dbReference>
<dbReference type="STRING" id="224308.BSU18590"/>
<dbReference type="PaxDb" id="224308-BSU18590"/>
<dbReference type="EnsemblBacteria" id="CAB13752">
    <property type="protein sequence ID" value="CAB13752"/>
    <property type="gene ID" value="BSU_18590"/>
</dbReference>
<dbReference type="GeneID" id="940105"/>
<dbReference type="KEGG" id="bsu:BSU18590"/>
<dbReference type="PATRIC" id="fig|224308.179.peg.2026"/>
<dbReference type="InParanoid" id="O31830"/>
<dbReference type="OrthoDB" id="2935045at2"/>
<dbReference type="BioCyc" id="BSUB:BSU18590-MONOMER"/>
<dbReference type="Proteomes" id="UP000001570">
    <property type="component" value="Chromosome"/>
</dbReference>
<dbReference type="GO" id="GO:0005886">
    <property type="term" value="C:plasma membrane"/>
    <property type="evidence" value="ECO:0007669"/>
    <property type="project" value="UniProtKB-SubCell"/>
</dbReference>
<dbReference type="InterPro" id="IPR031374">
    <property type="entry name" value="UPF0715"/>
</dbReference>
<dbReference type="Pfam" id="PF17094">
    <property type="entry name" value="UPF0715"/>
    <property type="match status" value="1"/>
</dbReference>
<accession>O31830</accession>
<gene>
    <name type="primary">yoaG</name>
    <name type="ordered locus">BSU18590</name>
</gene>